<comment type="function">
    <text>Confers resistance to late blight (Phytophthora infestans) races carrying the avirulence gene Avr1. Resistance proteins guard the plant against pathogens that contain an appropriate avirulence protein via an indirect interaction with this avirulence protein. That triggers a defense system including the hypersensitive response, which restricts the pathogen growth.</text>
</comment>
<comment type="subcellular location">
    <subcellularLocation>
        <location evidence="1">Cytoplasm</location>
    </subcellularLocation>
    <subcellularLocation>
        <location evidence="1">Membrane</location>
        <topology evidence="1">Peripheral membrane protein</topology>
    </subcellularLocation>
</comment>
<comment type="miscellaneous">
    <text>This protein is encoded by the haplotype A genome of the allohexaploid Solanum demissum.</text>
</comment>
<comment type="similarity">
    <text evidence="3">Belongs to the disease resistance NB-LRR family.</text>
</comment>
<comment type="sequence caution" evidence="3">
    <conflict type="erroneous gene model prediction">
        <sequence resource="EMBL-CDS" id="AAU93588"/>
    </conflict>
</comment>
<name>R1A_SOLDE</name>
<protein>
    <recommendedName>
        <fullName>Late blight resistance protein R1-A</fullName>
        <shortName>Protein R1</shortName>
    </recommendedName>
</protein>
<proteinExistence type="inferred from homology"/>
<feature type="chain" id="PRO_0000233959" description="Late blight resistance protein R1-A">
    <location>
        <begin position="1"/>
        <end position="1293"/>
    </location>
</feature>
<feature type="domain" description="NB-ARC">
    <location>
        <begin position="539"/>
        <end position="826"/>
    </location>
</feature>
<feature type="repeat" description="LRR 1">
    <location>
        <begin position="876"/>
        <end position="899"/>
    </location>
</feature>
<feature type="repeat" description="LRR 2">
    <location>
        <begin position="956"/>
        <end position="981"/>
    </location>
</feature>
<feature type="repeat" description="LRR 3">
    <location>
        <begin position="1027"/>
        <end position="1049"/>
    </location>
</feature>
<feature type="repeat" description="LRR 4">
    <location>
        <begin position="1056"/>
        <end position="1079"/>
    </location>
</feature>
<feature type="repeat" description="LRR 5">
    <location>
        <begin position="1102"/>
        <end position="1125"/>
    </location>
</feature>
<feature type="repeat" description="LRR 6">
    <location>
        <begin position="1149"/>
        <end position="1172"/>
    </location>
</feature>
<feature type="repeat" description="LRR 7">
    <location>
        <begin position="1175"/>
        <end position="1197"/>
    </location>
</feature>
<feature type="repeat" description="LRR 8">
    <location>
        <begin position="1198"/>
        <end position="1222"/>
    </location>
</feature>
<feature type="repeat" description="LRR 9">
    <location>
        <begin position="1235"/>
        <end position="1259"/>
    </location>
</feature>
<feature type="coiled-coil region" evidence="2">
    <location>
        <begin position="423"/>
        <end position="446"/>
    </location>
</feature>
<feature type="coiled-coil region" evidence="2">
    <location>
        <begin position="538"/>
        <end position="560"/>
    </location>
</feature>
<feature type="binding site" evidence="2">
    <location>
        <begin position="572"/>
        <end position="579"/>
    </location>
    <ligand>
        <name>ATP</name>
        <dbReference type="ChEBI" id="CHEBI:30616"/>
    </ligand>
</feature>
<organism>
    <name type="scientific">Solanum demissum</name>
    <name type="common">Wild potato</name>
    <dbReference type="NCBI Taxonomy" id="50514"/>
    <lineage>
        <taxon>Eukaryota</taxon>
        <taxon>Viridiplantae</taxon>
        <taxon>Streptophyta</taxon>
        <taxon>Embryophyta</taxon>
        <taxon>Tracheophyta</taxon>
        <taxon>Spermatophyta</taxon>
        <taxon>Magnoliopsida</taxon>
        <taxon>eudicotyledons</taxon>
        <taxon>Gunneridae</taxon>
        <taxon>Pentapetalae</taxon>
        <taxon>asterids</taxon>
        <taxon>lamiids</taxon>
        <taxon>Solanales</taxon>
        <taxon>Solanaceae</taxon>
        <taxon>Solanoideae</taxon>
        <taxon>Solaneae</taxon>
        <taxon>Solanum</taxon>
    </lineage>
</organism>
<reference key="1">
    <citation type="journal article" date="2002" name="Plant J.">
        <title>The R1 gene for potato resistance to late blight (Phytophthora infestans) belongs to the leucine zipper/NBS/LRR class of plant resistance genes.</title>
        <authorList>
            <person name="Ballvora A."/>
            <person name="Ercolano M.R."/>
            <person name="Weiss J."/>
            <person name="Meksem K."/>
            <person name="Bormann C.A."/>
            <person name="Oberhagemann P."/>
            <person name="Salamini F."/>
            <person name="Gebhardt C."/>
        </authorList>
    </citation>
    <scope>NUCLEOTIDE SEQUENCE [GENOMIC DNA / MRNA]</scope>
</reference>
<reference key="2">
    <citation type="journal article" date="2005" name="Plant J.">
        <title>The R1 resistance gene cluster contains three groups of independently evolving, type I R1 homologues and shows substantial structural variation among haplotypes of Solanum demissum.</title>
        <authorList>
            <person name="Kuang H."/>
            <person name="Wei F."/>
            <person name="Marano M.R."/>
            <person name="Wirtz U."/>
            <person name="Wang X."/>
            <person name="Liu J."/>
            <person name="Shum W.P."/>
            <person name="Zaborsky J."/>
            <person name="Tallon L.J."/>
            <person name="Rensink W."/>
            <person name="Lobst S."/>
            <person name="Zhang P."/>
            <person name="Tornqvist C.-E."/>
            <person name="Tek A."/>
            <person name="Bamberg J."/>
            <person name="Helgeson J."/>
            <person name="Fry W."/>
            <person name="You F."/>
            <person name="Luo M.-C."/>
            <person name="Jiang J."/>
            <person name="Buell C.R."/>
            <person name="Baker B."/>
        </authorList>
    </citation>
    <scope>NUCLEOTIDE SEQUENCE [GENOMIC DNA]</scope>
</reference>
<keyword id="KW-0067">ATP-binding</keyword>
<keyword id="KW-0175">Coiled coil</keyword>
<keyword id="KW-0963">Cytoplasm</keyword>
<keyword id="KW-0381">Hypersensitive response</keyword>
<keyword id="KW-0433">Leucine-rich repeat</keyword>
<keyword id="KW-0472">Membrane</keyword>
<keyword id="KW-0547">Nucleotide-binding</keyword>
<keyword id="KW-0611">Plant defense</keyword>
<keyword id="KW-0677">Repeat</keyword>
<accession>Q8W1E0</accession>
<accession>Q60CZ9</accession>
<evidence type="ECO:0000250" key="1"/>
<evidence type="ECO:0000255" key="2"/>
<evidence type="ECO:0000305" key="3"/>
<dbReference type="EMBL" id="AF447489">
    <property type="protein sequence ID" value="AAL39063.1"/>
    <property type="molecule type" value="Genomic_DNA"/>
</dbReference>
<dbReference type="EMBL" id="AC151815">
    <property type="protein sequence ID" value="AAU93588.1"/>
    <property type="status" value="ALT_SEQ"/>
    <property type="molecule type" value="Genomic_DNA"/>
</dbReference>
<dbReference type="SMR" id="Q8W1E0"/>
<dbReference type="GO" id="GO:0005737">
    <property type="term" value="C:cytoplasm"/>
    <property type="evidence" value="ECO:0007669"/>
    <property type="project" value="UniProtKB-SubCell"/>
</dbReference>
<dbReference type="GO" id="GO:0016020">
    <property type="term" value="C:membrane"/>
    <property type="evidence" value="ECO:0007669"/>
    <property type="project" value="UniProtKB-SubCell"/>
</dbReference>
<dbReference type="GO" id="GO:0043531">
    <property type="term" value="F:ADP binding"/>
    <property type="evidence" value="ECO:0007669"/>
    <property type="project" value="InterPro"/>
</dbReference>
<dbReference type="GO" id="GO:0005524">
    <property type="term" value="F:ATP binding"/>
    <property type="evidence" value="ECO:0007669"/>
    <property type="project" value="UniProtKB-KW"/>
</dbReference>
<dbReference type="GO" id="GO:0009626">
    <property type="term" value="P:plant-type hypersensitive response"/>
    <property type="evidence" value="ECO:0007669"/>
    <property type="project" value="UniProtKB-KW"/>
</dbReference>
<dbReference type="CDD" id="cd14798">
    <property type="entry name" value="RX-CC_like"/>
    <property type="match status" value="1"/>
</dbReference>
<dbReference type="FunFam" id="3.40.50.300:FF:001091">
    <property type="entry name" value="Probable disease resistance protein At1g61300"/>
    <property type="match status" value="1"/>
</dbReference>
<dbReference type="FunFam" id="1.10.10.10:FF:000322">
    <property type="entry name" value="Probable disease resistance protein At1g63360"/>
    <property type="match status" value="1"/>
</dbReference>
<dbReference type="Gene3D" id="1.10.8.430">
    <property type="entry name" value="Helical domain of apoptotic protease-activating factors"/>
    <property type="match status" value="1"/>
</dbReference>
<dbReference type="Gene3D" id="3.40.50.300">
    <property type="entry name" value="P-loop containing nucleotide triphosphate hydrolases"/>
    <property type="match status" value="1"/>
</dbReference>
<dbReference type="Gene3D" id="3.80.10.10">
    <property type="entry name" value="Ribonuclease Inhibitor"/>
    <property type="match status" value="1"/>
</dbReference>
<dbReference type="Gene3D" id="1.10.10.10">
    <property type="entry name" value="Winged helix-like DNA-binding domain superfamily/Winged helix DNA-binding domain"/>
    <property type="match status" value="1"/>
</dbReference>
<dbReference type="InterPro" id="IPR042197">
    <property type="entry name" value="Apaf_helical"/>
</dbReference>
<dbReference type="InterPro" id="IPR044974">
    <property type="entry name" value="Disease_R_plants"/>
</dbReference>
<dbReference type="InterPro" id="IPR032675">
    <property type="entry name" value="LRR_dom_sf"/>
</dbReference>
<dbReference type="InterPro" id="IPR002182">
    <property type="entry name" value="NB-ARC"/>
</dbReference>
<dbReference type="InterPro" id="IPR027417">
    <property type="entry name" value="P-loop_NTPase"/>
</dbReference>
<dbReference type="InterPro" id="IPR021929">
    <property type="entry name" value="R1A-like_N"/>
</dbReference>
<dbReference type="InterPro" id="IPR038005">
    <property type="entry name" value="RX-like_CC"/>
</dbReference>
<dbReference type="InterPro" id="IPR036388">
    <property type="entry name" value="WH-like_DNA-bd_sf"/>
</dbReference>
<dbReference type="PANTHER" id="PTHR23155:SF1152">
    <property type="entry name" value="AAA+ ATPASE DOMAIN-CONTAINING PROTEIN"/>
    <property type="match status" value="1"/>
</dbReference>
<dbReference type="PANTHER" id="PTHR23155">
    <property type="entry name" value="DISEASE RESISTANCE PROTEIN RP"/>
    <property type="match status" value="1"/>
</dbReference>
<dbReference type="Pfam" id="PF00931">
    <property type="entry name" value="NB-ARC"/>
    <property type="match status" value="1"/>
</dbReference>
<dbReference type="Pfam" id="PF12061">
    <property type="entry name" value="NB-LRR"/>
    <property type="match status" value="1"/>
</dbReference>
<dbReference type="Pfam" id="PF23559">
    <property type="entry name" value="WH_DRP"/>
    <property type="match status" value="1"/>
</dbReference>
<dbReference type="PRINTS" id="PR00364">
    <property type="entry name" value="DISEASERSIST"/>
</dbReference>
<dbReference type="SUPFAM" id="SSF52058">
    <property type="entry name" value="L domain-like"/>
    <property type="match status" value="1"/>
</dbReference>
<dbReference type="SUPFAM" id="SSF52540">
    <property type="entry name" value="P-loop containing nucleoside triphosphate hydrolases"/>
    <property type="match status" value="1"/>
</dbReference>
<sequence>MNFNNELSDLKNRFLFRTLRAQKCSDVARDRIDFFIWELKFLNCFLHLQSFAFASECGMLDISQKMIEICKRFNTPPPHNSFAYWKEVICKRLCAISIQPDASSDDGFACWKKVIWKTKQEFRAKYSFPKTLLADNKVYDDDDTNPKFVMEFIDAVVGNLNVLVKINDPSSLLFVPGPKEQIEQVLKELKLLRFFVCFVSNKCIEPQYQHTTFYTHALIEASHIAMVVWLNLPIYGNRNQDLASSEVSCLLSDFMEMKIKSIQPDISRNNIYIDVLRALKSTIPQAQDKHAAESGIVETPTHNLMVGLSDQMANLQEMLCLLRDNLIHLPILDLEFHLQDMDSVIVDAGLLIYSLYDIKGQKEDTTLEDINQALGFDLPRNIEPIKAMINLVMQKAFQCNLPRIHGLGYVDFLLKNLKDFQGRYSDSLDFLKNQLQVIQTEFESLQPFLKVVVEEPHNKLKTLNEDCATQIIRKAYEVEYVVDACINKEVPQWCIERWLLDIIEEITCIKAKIQEKNTVEDTMKTVIARTSSKLARTPRMNEEIVGFEDVIENLRKKLLNGTKGQDVISIHGMPGLGKTTLANSLYSDRSVFSQFDICAQCCVSQVYSYKDLILALLRDAIGEGSVRRELHANELADMLRKTLLPRRYLILVDDVWENSVWDDLRGCFPDVNNRSRIILTTRHHEVAKYASVHSDPLHLRMFDEVESWKLLEKKVFGEESCSPLLKNVGLRIAKMCGQLPLSIVLVAGILSEMEKEVECWEQVANNLGSYIHNDSRAIVDKSYHVLPCHLKSCFLYFGAFLEDRVIDISRLIRLWISEAFIKSSEGRRLEDIAEGYLENLIGRNLVMVTQRSISDGKAKECRLHDVLLDFCKERAAEENFLLWINRDQITKPSSCVYSHKQHAHLAFTEMHNLVEWSASCSFVGSVVLSNKYDSYFSTRDISSLHDFSISRILPNFKFLKVLDLEHRVFIDFIPTELVYLKYFSAHIEQNSIPSSISNLWNLETLILKSPIYALRCTLLLPSTVWDMVKLRHLYIPDFSTRIEAALLENSAKLYNLETLSTLYFSRVEDAELMLRKTPNLRKLICEVECLEYPPQYHVLNFPIRLEILKLYRSKFKTIPFCISAPNLKYLKLCGFSLDSQYLSETADHLKHLEVLILYKVEFGDHREWKVSNGKFPQLKILKLEYLSLVKWIVADDAFPNLEQLVLRGCQDLMEIPSCFMDILSLKYIGVEYCNESVVKSALNIQETQVEDYQNTNFKLVLIEFSLQKKAWKLNLTDAEDMHNAVKNILAEIR</sequence>
<gene>
    <name type="primary">R1A</name>
    <name type="ORF">PGEC472P22.10</name>
</gene>